<evidence type="ECO:0000255" key="1">
    <source>
        <dbReference type="HAMAP-Rule" id="MF_00038"/>
    </source>
</evidence>
<sequence length="335" mass="36987">MPPLFCVLKAFFIGLVVSLILVKPLIWLKKQGLQDRIHKDHCEKLEKLHKNKAHIPTAGGIIFVLSVVLSILLLLPCNLWSTWFLVGATLLWGALGWRDDQIKNKRKVGHGLSAKRKFFIQNCLAIGTVLPIMIAYGESFLCMHLPFVGIVSLPHCWLGYLFSFSIAVLAIVGTSNSVNLTDGLDGLAAGSMVIACLGMLIVTFAYGAPWAFISGVLLATLAGSCLGFLYYNRSPARIFMGDTGSLFLGGMLGICAVLLRAEFMLLFMGGIFVLESLSVILQVGSCKLRKKRVFLCSPLHHHYEYKGYPEKVVVRNFWIIEFLCVAIGIFAVFWG</sequence>
<keyword id="KW-0131">Cell cycle</keyword>
<keyword id="KW-0132">Cell division</keyword>
<keyword id="KW-0997">Cell inner membrane</keyword>
<keyword id="KW-1003">Cell membrane</keyword>
<keyword id="KW-0133">Cell shape</keyword>
<keyword id="KW-0961">Cell wall biogenesis/degradation</keyword>
<keyword id="KW-0460">Magnesium</keyword>
<keyword id="KW-0472">Membrane</keyword>
<keyword id="KW-0479">Metal-binding</keyword>
<keyword id="KW-0573">Peptidoglycan synthesis</keyword>
<keyword id="KW-0808">Transferase</keyword>
<keyword id="KW-0812">Transmembrane</keyword>
<keyword id="KW-1133">Transmembrane helix</keyword>
<protein>
    <recommendedName>
        <fullName evidence="1">Phospho-N-acetylmuramoyl-pentapeptide-transferase</fullName>
        <ecNumber evidence="1">2.7.8.13</ecNumber>
    </recommendedName>
    <alternativeName>
        <fullName evidence="1">UDP-MurNAc-pentapeptide phosphotransferase</fullName>
    </alternativeName>
</protein>
<comment type="function">
    <text evidence="1">Catalyzes the initial step of the lipid cycle reactions in the biosynthesis of the cell wall peptidoglycan: transfers peptidoglycan precursor phospho-MurNAc-pentapeptide from UDP-MurNAc-pentapeptide onto the lipid carrier undecaprenyl phosphate, yielding undecaprenyl-pyrophosphoryl-MurNAc-pentapeptide, known as lipid I.</text>
</comment>
<comment type="catalytic activity">
    <reaction evidence="1">
        <text>UDP-N-acetyl-alpha-D-muramoyl-L-alanyl-gamma-D-glutamyl-meso-2,6-diaminopimeloyl-D-alanyl-D-alanine + di-trans,octa-cis-undecaprenyl phosphate = di-trans,octa-cis-undecaprenyl diphospho-N-acetyl-alpha-D-muramoyl-L-alanyl-D-glutamyl-meso-2,6-diaminopimeloyl-D-alanyl-D-alanine + UMP</text>
        <dbReference type="Rhea" id="RHEA:28386"/>
        <dbReference type="ChEBI" id="CHEBI:57865"/>
        <dbReference type="ChEBI" id="CHEBI:60392"/>
        <dbReference type="ChEBI" id="CHEBI:61386"/>
        <dbReference type="ChEBI" id="CHEBI:61387"/>
        <dbReference type="EC" id="2.7.8.13"/>
    </reaction>
</comment>
<comment type="cofactor">
    <cofactor evidence="1">
        <name>Mg(2+)</name>
        <dbReference type="ChEBI" id="CHEBI:18420"/>
    </cofactor>
</comment>
<comment type="pathway">
    <text evidence="1">Cell wall biogenesis; peptidoglycan biosynthesis.</text>
</comment>
<comment type="subcellular location">
    <subcellularLocation>
        <location evidence="1">Cell inner membrane</location>
        <topology evidence="1">Multi-pass membrane protein</topology>
    </subcellularLocation>
</comment>
<comment type="similarity">
    <text evidence="1">Belongs to the glycosyltransferase 4 family. MraY subfamily.</text>
</comment>
<dbReference type="EC" id="2.7.8.13" evidence="1"/>
<dbReference type="EMBL" id="AE002160">
    <property type="protein sequence ID" value="AAF39016.1"/>
    <property type="molecule type" value="Genomic_DNA"/>
</dbReference>
<dbReference type="PIR" id="E81736">
    <property type="entry name" value="E81736"/>
</dbReference>
<dbReference type="RefSeq" id="WP_010904273.1">
    <property type="nucleotide sequence ID" value="NC_002620.2"/>
</dbReference>
<dbReference type="SMR" id="Q9PLG6"/>
<dbReference type="GeneID" id="1245672"/>
<dbReference type="KEGG" id="cmu:TC_0138"/>
<dbReference type="PATRIC" id="fig|243161.6.peg.151"/>
<dbReference type="eggNOG" id="COG0472">
    <property type="taxonomic scope" value="Bacteria"/>
</dbReference>
<dbReference type="HOGENOM" id="CLU_023982_0_1_0"/>
<dbReference type="UniPathway" id="UPA00219"/>
<dbReference type="Proteomes" id="UP000000800">
    <property type="component" value="Chromosome"/>
</dbReference>
<dbReference type="GO" id="GO:0005886">
    <property type="term" value="C:plasma membrane"/>
    <property type="evidence" value="ECO:0007669"/>
    <property type="project" value="UniProtKB-SubCell"/>
</dbReference>
<dbReference type="GO" id="GO:0046872">
    <property type="term" value="F:metal ion binding"/>
    <property type="evidence" value="ECO:0007669"/>
    <property type="project" value="UniProtKB-KW"/>
</dbReference>
<dbReference type="GO" id="GO:0008963">
    <property type="term" value="F:phospho-N-acetylmuramoyl-pentapeptide-transferase activity"/>
    <property type="evidence" value="ECO:0007669"/>
    <property type="project" value="UniProtKB-UniRule"/>
</dbReference>
<dbReference type="GO" id="GO:0051992">
    <property type="term" value="F:UDP-N-acetylmuramoyl-L-alanyl-D-glutamyl-meso-2,6-diaminopimelyl-D-alanyl-D-alanine:undecaprenyl-phosphate transferase activity"/>
    <property type="evidence" value="ECO:0007669"/>
    <property type="project" value="RHEA"/>
</dbReference>
<dbReference type="GO" id="GO:0051301">
    <property type="term" value="P:cell division"/>
    <property type="evidence" value="ECO:0007669"/>
    <property type="project" value="UniProtKB-KW"/>
</dbReference>
<dbReference type="GO" id="GO:0071555">
    <property type="term" value="P:cell wall organization"/>
    <property type="evidence" value="ECO:0007669"/>
    <property type="project" value="UniProtKB-KW"/>
</dbReference>
<dbReference type="GO" id="GO:0009252">
    <property type="term" value="P:peptidoglycan biosynthetic process"/>
    <property type="evidence" value="ECO:0007669"/>
    <property type="project" value="UniProtKB-UniRule"/>
</dbReference>
<dbReference type="GO" id="GO:0008360">
    <property type="term" value="P:regulation of cell shape"/>
    <property type="evidence" value="ECO:0007669"/>
    <property type="project" value="UniProtKB-KW"/>
</dbReference>
<dbReference type="CDD" id="cd06852">
    <property type="entry name" value="GT_MraY"/>
    <property type="match status" value="1"/>
</dbReference>
<dbReference type="HAMAP" id="MF_00038">
    <property type="entry name" value="MraY"/>
    <property type="match status" value="1"/>
</dbReference>
<dbReference type="InterPro" id="IPR000715">
    <property type="entry name" value="Glycosyl_transferase_4"/>
</dbReference>
<dbReference type="InterPro" id="IPR003524">
    <property type="entry name" value="PNAcMuramoyl-5peptid_Trfase"/>
</dbReference>
<dbReference type="InterPro" id="IPR018480">
    <property type="entry name" value="PNAcMuramoyl-5peptid_Trfase_CS"/>
</dbReference>
<dbReference type="NCBIfam" id="TIGR00445">
    <property type="entry name" value="mraY"/>
    <property type="match status" value="1"/>
</dbReference>
<dbReference type="PANTHER" id="PTHR22926">
    <property type="entry name" value="PHOSPHO-N-ACETYLMURAMOYL-PENTAPEPTIDE-TRANSFERASE"/>
    <property type="match status" value="1"/>
</dbReference>
<dbReference type="PANTHER" id="PTHR22926:SF5">
    <property type="entry name" value="PHOSPHO-N-ACETYLMURAMOYL-PENTAPEPTIDE-TRANSFERASE HOMOLOG"/>
    <property type="match status" value="1"/>
</dbReference>
<dbReference type="Pfam" id="PF00953">
    <property type="entry name" value="Glycos_transf_4"/>
    <property type="match status" value="1"/>
</dbReference>
<dbReference type="PROSITE" id="PS01347">
    <property type="entry name" value="MRAY_1"/>
    <property type="match status" value="1"/>
</dbReference>
<dbReference type="PROSITE" id="PS01348">
    <property type="entry name" value="MRAY_2"/>
    <property type="match status" value="1"/>
</dbReference>
<proteinExistence type="inferred from homology"/>
<feature type="chain" id="PRO_0000108805" description="Phospho-N-acetylmuramoyl-pentapeptide-transferase">
    <location>
        <begin position="1"/>
        <end position="335"/>
    </location>
</feature>
<feature type="transmembrane region" description="Helical" evidence="1">
    <location>
        <begin position="2"/>
        <end position="22"/>
    </location>
</feature>
<feature type="transmembrane region" description="Helical" evidence="1">
    <location>
        <begin position="55"/>
        <end position="75"/>
    </location>
</feature>
<feature type="transmembrane region" description="Helical" evidence="1">
    <location>
        <begin position="77"/>
        <end position="97"/>
    </location>
</feature>
<feature type="transmembrane region" description="Helical" evidence="1">
    <location>
        <begin position="118"/>
        <end position="137"/>
    </location>
</feature>
<feature type="transmembrane region" description="Helical" evidence="1">
    <location>
        <begin position="153"/>
        <end position="173"/>
    </location>
</feature>
<feature type="transmembrane region" description="Helical" evidence="1">
    <location>
        <begin position="193"/>
        <end position="213"/>
    </location>
</feature>
<feature type="transmembrane region" description="Helical" evidence="1">
    <location>
        <begin position="238"/>
        <end position="258"/>
    </location>
</feature>
<feature type="transmembrane region" description="Helical" evidence="1">
    <location>
        <begin position="263"/>
        <end position="283"/>
    </location>
</feature>
<feature type="transmembrane region" description="Helical" evidence="1">
    <location>
        <begin position="313"/>
        <end position="333"/>
    </location>
</feature>
<organism>
    <name type="scientific">Chlamydia muridarum (strain MoPn / Nigg)</name>
    <dbReference type="NCBI Taxonomy" id="243161"/>
    <lineage>
        <taxon>Bacteria</taxon>
        <taxon>Pseudomonadati</taxon>
        <taxon>Chlamydiota</taxon>
        <taxon>Chlamydiia</taxon>
        <taxon>Chlamydiales</taxon>
        <taxon>Chlamydiaceae</taxon>
        <taxon>Chlamydia/Chlamydophila group</taxon>
        <taxon>Chlamydia</taxon>
    </lineage>
</organism>
<gene>
    <name evidence="1" type="primary">mraY</name>
    <name type="ordered locus">TC_0138</name>
</gene>
<reference key="1">
    <citation type="journal article" date="2000" name="Nucleic Acids Res.">
        <title>Genome sequences of Chlamydia trachomatis MoPn and Chlamydia pneumoniae AR39.</title>
        <authorList>
            <person name="Read T.D."/>
            <person name="Brunham R.C."/>
            <person name="Shen C."/>
            <person name="Gill S.R."/>
            <person name="Heidelberg J.F."/>
            <person name="White O."/>
            <person name="Hickey E.K."/>
            <person name="Peterson J.D."/>
            <person name="Utterback T.R."/>
            <person name="Berry K.J."/>
            <person name="Bass S."/>
            <person name="Linher K.D."/>
            <person name="Weidman J.F."/>
            <person name="Khouri H.M."/>
            <person name="Craven B."/>
            <person name="Bowman C."/>
            <person name="Dodson R.J."/>
            <person name="Gwinn M.L."/>
            <person name="Nelson W.C."/>
            <person name="DeBoy R.T."/>
            <person name="Kolonay J.F."/>
            <person name="McClarty G."/>
            <person name="Salzberg S.L."/>
            <person name="Eisen J.A."/>
            <person name="Fraser C.M."/>
        </authorList>
    </citation>
    <scope>NUCLEOTIDE SEQUENCE [LARGE SCALE GENOMIC DNA]</scope>
    <source>
        <strain>MoPn / Nigg</strain>
    </source>
</reference>
<name>MRAY_CHLMU</name>
<accession>Q9PLG6</accession>